<feature type="signal peptide" evidence="1">
    <location>
        <begin position="1"/>
        <end position="21"/>
    </location>
</feature>
<feature type="chain" id="PRO_0000282532" description="Leu/Ile/Val-binding protein homolog 6">
    <location>
        <begin position="22"/>
        <end position="390"/>
    </location>
</feature>
<gene>
    <name type="ordered locus">BRA0648</name>
    <name type="ordered locus">BS1330_II0642</name>
</gene>
<organism>
    <name type="scientific">Brucella suis biovar 1 (strain 1330)</name>
    <dbReference type="NCBI Taxonomy" id="204722"/>
    <lineage>
        <taxon>Bacteria</taxon>
        <taxon>Pseudomonadati</taxon>
        <taxon>Pseudomonadota</taxon>
        <taxon>Alphaproteobacteria</taxon>
        <taxon>Hyphomicrobiales</taxon>
        <taxon>Brucellaceae</taxon>
        <taxon>Brucella/Ochrobactrum group</taxon>
        <taxon>Brucella</taxon>
    </lineage>
</organism>
<comment type="function">
    <text evidence="2">Component of an amino-acid transport system.</text>
</comment>
<comment type="similarity">
    <text evidence="2">Belongs to the leucine-binding protein family.</text>
</comment>
<sequence>MKKIALTALAVFSLAASAAYADVVKVGVIGPFSGPFALQGKNFKAGIDAYMAEHGNKVGDDTVEVVYRDVPQADPAQSKALAQELVVKEGVQYLAGFYFTPDAMAVTPILKQGNVPMVVMNAATSSIVTKSPYVVRTSFTTWQTSTPIARVALDKGVKKVISVVSDYGPGVDAENAFKAAFTDAGGEVVEAIRMPLATNDFSPIMQRIKDSGAQGVFAFLPSDPTTLGFMKAYVDNGLKSSGIQLFAPGDLTQESDLPALGENALGVLTTFHYAVSHDSPENRKFVEEARKAIGNPAELSFPSVGAYDGMHVIYKMIEATGGKKDAAKAVEAVKGMEWVSPRGPVSIDPESRHITQNIYLREVAKADDGTYYNKEIQTFEKQGDPGLKAQ</sequence>
<proteinExistence type="inferred from homology"/>
<protein>
    <recommendedName>
        <fullName>Leu/Ile/Val-binding protein homolog 6</fullName>
    </recommendedName>
</protein>
<accession>Q8FW17</accession>
<accession>G0KD25</accession>
<keyword id="KW-0029">Amino-acid transport</keyword>
<keyword id="KW-0732">Signal</keyword>
<keyword id="KW-0813">Transport</keyword>
<name>LIVB6_BRUSU</name>
<dbReference type="EMBL" id="AE014292">
    <property type="protein sequence ID" value="AAN33837.1"/>
    <property type="molecule type" value="Genomic_DNA"/>
</dbReference>
<dbReference type="EMBL" id="CP002998">
    <property type="protein sequence ID" value="AEM20113.1"/>
    <property type="molecule type" value="Genomic_DNA"/>
</dbReference>
<dbReference type="RefSeq" id="WP_004692226.1">
    <property type="nucleotide sequence ID" value="NZ_KN046805.1"/>
</dbReference>
<dbReference type="SMR" id="Q8FW17"/>
<dbReference type="KEGG" id="bms:BRA0648"/>
<dbReference type="KEGG" id="bsi:BS1330_II0642"/>
<dbReference type="PATRIC" id="fig|204722.22.peg.2349"/>
<dbReference type="HOGENOM" id="CLU_027128_1_2_5"/>
<dbReference type="Proteomes" id="UP000007104">
    <property type="component" value="Chromosome II"/>
</dbReference>
<dbReference type="GO" id="GO:0006865">
    <property type="term" value="P:amino acid transport"/>
    <property type="evidence" value="ECO:0007669"/>
    <property type="project" value="UniProtKB-KW"/>
</dbReference>
<dbReference type="CDD" id="cd20013">
    <property type="entry name" value="PBP1_RPA0985_benzoate-like"/>
    <property type="match status" value="1"/>
</dbReference>
<dbReference type="Gene3D" id="3.40.50.2300">
    <property type="match status" value="2"/>
</dbReference>
<dbReference type="InterPro" id="IPR051010">
    <property type="entry name" value="BCAA_transport"/>
</dbReference>
<dbReference type="InterPro" id="IPR028081">
    <property type="entry name" value="Leu-bd"/>
</dbReference>
<dbReference type="InterPro" id="IPR000709">
    <property type="entry name" value="Leu_Ile_Val-bd"/>
</dbReference>
<dbReference type="InterPro" id="IPR028082">
    <property type="entry name" value="Peripla_BP_I"/>
</dbReference>
<dbReference type="PANTHER" id="PTHR30483">
    <property type="entry name" value="LEUCINE-SPECIFIC-BINDING PROTEIN"/>
    <property type="match status" value="1"/>
</dbReference>
<dbReference type="PANTHER" id="PTHR30483:SF6">
    <property type="entry name" value="PERIPLASMIC BINDING PROTEIN OF ABC TRANSPORTER FOR NATURAL AMINO ACIDS"/>
    <property type="match status" value="1"/>
</dbReference>
<dbReference type="Pfam" id="PF13458">
    <property type="entry name" value="Peripla_BP_6"/>
    <property type="match status" value="1"/>
</dbReference>
<dbReference type="PRINTS" id="PR00337">
    <property type="entry name" value="LEUILEVALBP"/>
</dbReference>
<dbReference type="SUPFAM" id="SSF53822">
    <property type="entry name" value="Periplasmic binding protein-like I"/>
    <property type="match status" value="1"/>
</dbReference>
<evidence type="ECO:0000255" key="1"/>
<evidence type="ECO:0000305" key="2"/>
<reference key="1">
    <citation type="journal article" date="2002" name="Proc. Natl. Acad. Sci. U.S.A.">
        <title>The Brucella suis genome reveals fundamental similarities between animal and plant pathogens and symbionts.</title>
        <authorList>
            <person name="Paulsen I.T."/>
            <person name="Seshadri R."/>
            <person name="Nelson K.E."/>
            <person name="Eisen J.A."/>
            <person name="Heidelberg J.F."/>
            <person name="Read T.D."/>
            <person name="Dodson R.J."/>
            <person name="Umayam L.A."/>
            <person name="Brinkac L.M."/>
            <person name="Beanan M.J."/>
            <person name="Daugherty S.C."/>
            <person name="DeBoy R.T."/>
            <person name="Durkin A.S."/>
            <person name="Kolonay J.F."/>
            <person name="Madupu R."/>
            <person name="Nelson W.C."/>
            <person name="Ayodeji B."/>
            <person name="Kraul M."/>
            <person name="Shetty J."/>
            <person name="Malek J.A."/>
            <person name="Van Aken S.E."/>
            <person name="Riedmuller S."/>
            <person name="Tettelin H."/>
            <person name="Gill S.R."/>
            <person name="White O."/>
            <person name="Salzberg S.L."/>
            <person name="Hoover D.L."/>
            <person name="Lindler L.E."/>
            <person name="Halling S.M."/>
            <person name="Boyle S.M."/>
            <person name="Fraser C.M."/>
        </authorList>
    </citation>
    <scope>NUCLEOTIDE SEQUENCE [LARGE SCALE GENOMIC DNA]</scope>
    <source>
        <strain>1330</strain>
    </source>
</reference>
<reference key="2">
    <citation type="journal article" date="2011" name="J. Bacteriol.">
        <title>Revised genome sequence of Brucella suis 1330.</title>
        <authorList>
            <person name="Tae H."/>
            <person name="Shallom S."/>
            <person name="Settlage R."/>
            <person name="Preston D."/>
            <person name="Adams L.G."/>
            <person name="Garner H.R."/>
        </authorList>
    </citation>
    <scope>NUCLEOTIDE SEQUENCE [LARGE SCALE GENOMIC DNA]</scope>
    <source>
        <strain>1330</strain>
    </source>
</reference>